<sequence>MLVSDYHFDLPDSLIANYPMPDRTASRLLHLDGHSGEVVHRQFPDVLDLVQPGDLMVFNNTRVIPARVFGQKESGGKVEILVERVINVNEALAHVRASKSPKESSKLILGQDKGEHIEATMIGRSGALFHLVFDEPVLDVLMRAGHMPLPPYIERPDEDSDQERYQTVYNQKPGAVAAPTAGLHFDEALLEKLKAKGVETAFVTLHVGAGTFQPMKVENVKDHIMHAEYVEVEPSVVEQVKAAKARGGRVIAVGTTSVRSLESASQSGEIAPMQGDTSIFIYPGYEFKTVDALVTNFHLPESTLIMLISAFAGYDHVMAAYKKAVEQKYRFFSYGDAMFVTRNPQAKGPQGEE</sequence>
<accession>A6VYN2</accession>
<reference key="1">
    <citation type="submission" date="2007-06" db="EMBL/GenBank/DDBJ databases">
        <title>Complete sequence of Marinomonas sp. MWYL1.</title>
        <authorList>
            <consortium name="US DOE Joint Genome Institute"/>
            <person name="Copeland A."/>
            <person name="Lucas S."/>
            <person name="Lapidus A."/>
            <person name="Barry K."/>
            <person name="Glavina del Rio T."/>
            <person name="Dalin E."/>
            <person name="Tice H."/>
            <person name="Pitluck S."/>
            <person name="Kiss H."/>
            <person name="Brettin T."/>
            <person name="Bruce D."/>
            <person name="Detter J.C."/>
            <person name="Han C."/>
            <person name="Schmutz J."/>
            <person name="Larimer F."/>
            <person name="Land M."/>
            <person name="Hauser L."/>
            <person name="Kyrpides N."/>
            <person name="Kim E."/>
            <person name="Johnston A.W.B."/>
            <person name="Todd J.D."/>
            <person name="Rogers R."/>
            <person name="Wexler M."/>
            <person name="Bond P.L."/>
            <person name="Li Y."/>
            <person name="Richardson P."/>
        </authorList>
    </citation>
    <scope>NUCLEOTIDE SEQUENCE [LARGE SCALE GENOMIC DNA]</scope>
    <source>
        <strain>MWYL1</strain>
    </source>
</reference>
<gene>
    <name evidence="1" type="primary">queA</name>
    <name type="ordered locus">Mmwyl1_2648</name>
</gene>
<organism>
    <name type="scientific">Marinomonas sp. (strain MWYL1)</name>
    <dbReference type="NCBI Taxonomy" id="400668"/>
    <lineage>
        <taxon>Bacteria</taxon>
        <taxon>Pseudomonadati</taxon>
        <taxon>Pseudomonadota</taxon>
        <taxon>Gammaproteobacteria</taxon>
        <taxon>Oceanospirillales</taxon>
        <taxon>Oceanospirillaceae</taxon>
        <taxon>Marinomonas</taxon>
    </lineage>
</organism>
<dbReference type="EC" id="2.4.99.17" evidence="1"/>
<dbReference type="EMBL" id="CP000749">
    <property type="protein sequence ID" value="ABR71561.1"/>
    <property type="molecule type" value="Genomic_DNA"/>
</dbReference>
<dbReference type="SMR" id="A6VYN2"/>
<dbReference type="STRING" id="400668.Mmwyl1_2648"/>
<dbReference type="KEGG" id="mmw:Mmwyl1_2648"/>
<dbReference type="eggNOG" id="COG0809">
    <property type="taxonomic scope" value="Bacteria"/>
</dbReference>
<dbReference type="HOGENOM" id="CLU_039110_1_0_6"/>
<dbReference type="OrthoDB" id="9805933at2"/>
<dbReference type="UniPathway" id="UPA00392"/>
<dbReference type="GO" id="GO:0005737">
    <property type="term" value="C:cytoplasm"/>
    <property type="evidence" value="ECO:0007669"/>
    <property type="project" value="UniProtKB-SubCell"/>
</dbReference>
<dbReference type="GO" id="GO:0051075">
    <property type="term" value="F:S-adenosylmethionine:tRNA ribosyltransferase-isomerase activity"/>
    <property type="evidence" value="ECO:0007669"/>
    <property type="project" value="UniProtKB-EC"/>
</dbReference>
<dbReference type="GO" id="GO:0008616">
    <property type="term" value="P:queuosine biosynthetic process"/>
    <property type="evidence" value="ECO:0007669"/>
    <property type="project" value="UniProtKB-UniRule"/>
</dbReference>
<dbReference type="GO" id="GO:0002099">
    <property type="term" value="P:tRNA wobble guanine modification"/>
    <property type="evidence" value="ECO:0007669"/>
    <property type="project" value="TreeGrafter"/>
</dbReference>
<dbReference type="FunFam" id="3.40.1780.10:FF:000001">
    <property type="entry name" value="S-adenosylmethionine:tRNA ribosyltransferase-isomerase"/>
    <property type="match status" value="1"/>
</dbReference>
<dbReference type="Gene3D" id="2.40.10.240">
    <property type="entry name" value="QueA-like"/>
    <property type="match status" value="1"/>
</dbReference>
<dbReference type="Gene3D" id="3.40.1780.10">
    <property type="entry name" value="QueA-like"/>
    <property type="match status" value="1"/>
</dbReference>
<dbReference type="HAMAP" id="MF_00113">
    <property type="entry name" value="QueA"/>
    <property type="match status" value="1"/>
</dbReference>
<dbReference type="InterPro" id="IPR003699">
    <property type="entry name" value="QueA"/>
</dbReference>
<dbReference type="InterPro" id="IPR042118">
    <property type="entry name" value="QueA_dom1"/>
</dbReference>
<dbReference type="InterPro" id="IPR042119">
    <property type="entry name" value="QueA_dom2"/>
</dbReference>
<dbReference type="InterPro" id="IPR036100">
    <property type="entry name" value="QueA_sf"/>
</dbReference>
<dbReference type="NCBIfam" id="NF001140">
    <property type="entry name" value="PRK00147.1"/>
    <property type="match status" value="1"/>
</dbReference>
<dbReference type="NCBIfam" id="TIGR00113">
    <property type="entry name" value="queA"/>
    <property type="match status" value="1"/>
</dbReference>
<dbReference type="PANTHER" id="PTHR30307">
    <property type="entry name" value="S-ADENOSYLMETHIONINE:TRNA RIBOSYLTRANSFERASE-ISOMERASE"/>
    <property type="match status" value="1"/>
</dbReference>
<dbReference type="PANTHER" id="PTHR30307:SF0">
    <property type="entry name" value="S-ADENOSYLMETHIONINE:TRNA RIBOSYLTRANSFERASE-ISOMERASE"/>
    <property type="match status" value="1"/>
</dbReference>
<dbReference type="Pfam" id="PF02547">
    <property type="entry name" value="Queuosine_synth"/>
    <property type="match status" value="1"/>
</dbReference>
<dbReference type="SUPFAM" id="SSF111337">
    <property type="entry name" value="QueA-like"/>
    <property type="match status" value="1"/>
</dbReference>
<proteinExistence type="inferred from homology"/>
<evidence type="ECO:0000255" key="1">
    <source>
        <dbReference type="HAMAP-Rule" id="MF_00113"/>
    </source>
</evidence>
<protein>
    <recommendedName>
        <fullName evidence="1">S-adenosylmethionine:tRNA ribosyltransferase-isomerase</fullName>
        <ecNumber evidence="1">2.4.99.17</ecNumber>
    </recommendedName>
    <alternativeName>
        <fullName evidence="1">Queuosine biosynthesis protein QueA</fullName>
    </alternativeName>
</protein>
<feature type="chain" id="PRO_1000076009" description="S-adenosylmethionine:tRNA ribosyltransferase-isomerase">
    <location>
        <begin position="1"/>
        <end position="353"/>
    </location>
</feature>
<name>QUEA_MARMS</name>
<keyword id="KW-0963">Cytoplasm</keyword>
<keyword id="KW-0671">Queuosine biosynthesis</keyword>
<keyword id="KW-0949">S-adenosyl-L-methionine</keyword>
<keyword id="KW-0808">Transferase</keyword>
<comment type="function">
    <text evidence="1">Transfers and isomerizes the ribose moiety from AdoMet to the 7-aminomethyl group of 7-deazaguanine (preQ1-tRNA) to give epoxyqueuosine (oQ-tRNA).</text>
</comment>
<comment type="catalytic activity">
    <reaction evidence="1">
        <text>7-aminomethyl-7-carbaguanosine(34) in tRNA + S-adenosyl-L-methionine = epoxyqueuosine(34) in tRNA + adenine + L-methionine + 2 H(+)</text>
        <dbReference type="Rhea" id="RHEA:32155"/>
        <dbReference type="Rhea" id="RHEA-COMP:10342"/>
        <dbReference type="Rhea" id="RHEA-COMP:18582"/>
        <dbReference type="ChEBI" id="CHEBI:15378"/>
        <dbReference type="ChEBI" id="CHEBI:16708"/>
        <dbReference type="ChEBI" id="CHEBI:57844"/>
        <dbReference type="ChEBI" id="CHEBI:59789"/>
        <dbReference type="ChEBI" id="CHEBI:82833"/>
        <dbReference type="ChEBI" id="CHEBI:194443"/>
        <dbReference type="EC" id="2.4.99.17"/>
    </reaction>
</comment>
<comment type="pathway">
    <text evidence="1">tRNA modification; tRNA-queuosine biosynthesis.</text>
</comment>
<comment type="subunit">
    <text evidence="1">Monomer.</text>
</comment>
<comment type="subcellular location">
    <subcellularLocation>
        <location evidence="1">Cytoplasm</location>
    </subcellularLocation>
</comment>
<comment type="similarity">
    <text evidence="1">Belongs to the QueA family.</text>
</comment>